<feature type="chain" id="PRO_0000413199" description="Probable ferric reduction oxidase 1">
    <location>
        <begin position="1"/>
        <end position="704"/>
    </location>
</feature>
<feature type="topological domain" description="Cytoplasmic" evidence="2">
    <location>
        <begin position="1"/>
        <end position="16"/>
    </location>
</feature>
<feature type="transmembrane region" description="Helical" evidence="1">
    <location>
        <begin position="17"/>
        <end position="36"/>
    </location>
</feature>
<feature type="topological domain" description="Lumenal" evidence="2">
    <location>
        <begin position="37"/>
        <end position="62"/>
    </location>
</feature>
<feature type="transmembrane region" description="Helical" evidence="1">
    <location>
        <begin position="63"/>
        <end position="81"/>
    </location>
</feature>
<feature type="topological domain" description="Cytoplasmic" evidence="2">
    <location>
        <begin position="82"/>
        <end position="115"/>
    </location>
</feature>
<feature type="transmembrane region" description="Helical" evidence="1">
    <location>
        <begin position="116"/>
        <end position="139"/>
    </location>
</feature>
<feature type="topological domain" description="Lumenal" evidence="2">
    <location>
        <begin position="140"/>
        <end position="207"/>
    </location>
</feature>
<feature type="transmembrane region" description="Helical" evidence="1">
    <location>
        <begin position="208"/>
        <end position="231"/>
    </location>
</feature>
<feature type="topological domain" description="Cytoplasmic" evidence="2">
    <location>
        <begin position="232"/>
        <end position="282"/>
    </location>
</feature>
<feature type="transmembrane region" description="Helical" evidence="1">
    <location>
        <begin position="283"/>
        <end position="307"/>
    </location>
</feature>
<feature type="topological domain" description="Lumenal" evidence="2">
    <location>
        <begin position="308"/>
        <end position="329"/>
    </location>
</feature>
<feature type="transmembrane region" description="Helical" evidence="1">
    <location>
        <begin position="330"/>
        <end position="350"/>
    </location>
</feature>
<feature type="topological domain" description="Cytoplasmic" evidence="2">
    <location>
        <begin position="351"/>
        <end position="550"/>
    </location>
</feature>
<feature type="transmembrane region" description="Helical" evidence="1">
    <location>
        <begin position="551"/>
        <end position="573"/>
    </location>
</feature>
<feature type="topological domain" description="Lumenal" evidence="2">
    <location>
        <begin position="574"/>
        <end position="592"/>
    </location>
</feature>
<feature type="transmembrane region" description="Helical" evidence="1">
    <location>
        <begin position="593"/>
        <end position="614"/>
    </location>
</feature>
<feature type="topological domain" description="Cytoplasmic" evidence="2">
    <location>
        <begin position="615"/>
        <end position="704"/>
    </location>
</feature>
<feature type="domain" description="Ferric oxidoreductase">
    <location>
        <begin position="174"/>
        <end position="294"/>
    </location>
</feature>
<feature type="domain" description="FAD-binding FR-type" evidence="3">
    <location>
        <begin position="323"/>
        <end position="430"/>
    </location>
</feature>
<feature type="binding site" description="axial binding residue" evidence="6">
    <location>
        <position position="209"/>
    </location>
    <ligand>
        <name>heme</name>
        <dbReference type="ChEBI" id="CHEBI:30413"/>
    </ligand>
    <ligandPart>
        <name>Fe</name>
        <dbReference type="ChEBI" id="CHEBI:18248"/>
    </ligandPart>
</feature>
<feature type="binding site" description="axial binding residue" evidence="6">
    <location>
        <position position="223"/>
    </location>
    <ligand>
        <name>heme</name>
        <dbReference type="ChEBI" id="CHEBI:30413"/>
    </ligand>
    <ligandPart>
        <name>Fe</name>
        <dbReference type="ChEBI" id="CHEBI:18248"/>
    </ligandPart>
</feature>
<feature type="binding site" description="axial binding residue" evidence="6">
    <location>
        <position position="284"/>
    </location>
    <ligand>
        <name>heme</name>
        <dbReference type="ChEBI" id="CHEBI:30413"/>
    </ligand>
    <ligandPart>
        <name>Fe</name>
        <dbReference type="ChEBI" id="CHEBI:18248"/>
    </ligandPart>
</feature>
<feature type="binding site" description="axial binding residue" evidence="6">
    <location>
        <position position="297"/>
    </location>
    <ligand>
        <name>heme</name>
        <dbReference type="ChEBI" id="CHEBI:30413"/>
    </ligand>
    <ligandPart>
        <name>Fe</name>
        <dbReference type="ChEBI" id="CHEBI:18248"/>
    </ligandPart>
</feature>
<feature type="binding site" evidence="2">
    <location>
        <begin position="372"/>
        <end position="375"/>
    </location>
    <ligand>
        <name>FAD</name>
        <dbReference type="ChEBI" id="CHEBI:57692"/>
    </ligand>
</feature>
<feature type="binding site" evidence="2">
    <location>
        <begin position="422"/>
        <end position="425"/>
    </location>
    <ligand>
        <name>NAD(+)</name>
        <dbReference type="ChEBI" id="CHEBI:57540"/>
    </ligand>
</feature>
<feature type="sequence conflict" description="In Ref. 1; CAA70769." evidence="6" ref="1">
    <original>G</original>
    <variation>A</variation>
    <location>
        <position position="443"/>
    </location>
</feature>
<protein>
    <recommendedName>
        <fullName>Probable ferric reduction oxidase 1</fullName>
        <shortName>AtFRO1</shortName>
        <ecNumber>1.16.1.7</ecNumber>
    </recommendedName>
    <alternativeName>
        <fullName>Ferric-chelate reductase 1</fullName>
    </alternativeName>
</protein>
<keyword id="KW-0249">Electron transport</keyword>
<keyword id="KW-0274">FAD</keyword>
<keyword id="KW-0285">Flavoprotein</keyword>
<keyword id="KW-0349">Heme</keyword>
<keyword id="KW-0406">Ion transport</keyword>
<keyword id="KW-0408">Iron</keyword>
<keyword id="KW-0472">Membrane</keyword>
<keyword id="KW-0479">Metal-binding</keyword>
<keyword id="KW-0520">NAD</keyword>
<keyword id="KW-0560">Oxidoreductase</keyword>
<keyword id="KW-1185">Reference proteome</keyword>
<keyword id="KW-0812">Transmembrane</keyword>
<keyword id="KW-1133">Transmembrane helix</keyword>
<keyword id="KW-0813">Transport</keyword>
<dbReference type="EC" id="1.16.1.7"/>
<dbReference type="EMBL" id="Y09581">
    <property type="protein sequence ID" value="CAA70769.1"/>
    <property type="molecule type" value="Genomic_DNA"/>
</dbReference>
<dbReference type="EMBL" id="AC061957">
    <property type="protein sequence ID" value="AAF81317.1"/>
    <property type="molecule type" value="Genomic_DNA"/>
</dbReference>
<dbReference type="EMBL" id="CP002684">
    <property type="protein sequence ID" value="AEE27309.1"/>
    <property type="molecule type" value="Genomic_DNA"/>
</dbReference>
<dbReference type="PIR" id="F86146">
    <property type="entry name" value="F86146"/>
</dbReference>
<dbReference type="RefSeq" id="NP_171665.1">
    <property type="nucleotide sequence ID" value="NM_100041.2"/>
</dbReference>
<dbReference type="SMR" id="Q9LMM2"/>
<dbReference type="FunCoup" id="Q9LMM2">
    <property type="interactions" value="41"/>
</dbReference>
<dbReference type="STRING" id="3702.Q9LMM2"/>
<dbReference type="PaxDb" id="3702-AT1G01590.1"/>
<dbReference type="ProteomicsDB" id="230548"/>
<dbReference type="EnsemblPlants" id="AT1G01590.1">
    <property type="protein sequence ID" value="AT1G01590.1"/>
    <property type="gene ID" value="AT1G01590"/>
</dbReference>
<dbReference type="GeneID" id="837194"/>
<dbReference type="Gramene" id="AT1G01590.1">
    <property type="protein sequence ID" value="AT1G01590.1"/>
    <property type="gene ID" value="AT1G01590"/>
</dbReference>
<dbReference type="KEGG" id="ath:AT1G01590"/>
<dbReference type="Araport" id="AT1G01590"/>
<dbReference type="TAIR" id="AT1G01590">
    <property type="gene designation" value="FRO1"/>
</dbReference>
<dbReference type="eggNOG" id="KOG0039">
    <property type="taxonomic scope" value="Eukaryota"/>
</dbReference>
<dbReference type="HOGENOM" id="CLU_014777_1_0_1"/>
<dbReference type="InParanoid" id="Q9LMM2"/>
<dbReference type="OMA" id="TRYIIFP"/>
<dbReference type="PhylomeDB" id="Q9LMM2"/>
<dbReference type="BioCyc" id="ARA:AT1G01590-MONOMER"/>
<dbReference type="PRO" id="PR:Q9LMM2"/>
<dbReference type="Proteomes" id="UP000006548">
    <property type="component" value="Chromosome 1"/>
</dbReference>
<dbReference type="ExpressionAtlas" id="Q9LMM2">
    <property type="expression patterns" value="baseline and differential"/>
</dbReference>
<dbReference type="GO" id="GO:0016020">
    <property type="term" value="C:membrane"/>
    <property type="evidence" value="ECO:0007669"/>
    <property type="project" value="UniProtKB-SubCell"/>
</dbReference>
<dbReference type="GO" id="GO:0140618">
    <property type="term" value="F:ferric-chelate reductase (NADH) activity"/>
    <property type="evidence" value="ECO:0007669"/>
    <property type="project" value="UniProtKB-EC"/>
</dbReference>
<dbReference type="GO" id="GO:0000293">
    <property type="term" value="F:ferric-chelate reductase activity"/>
    <property type="evidence" value="ECO:0000315"/>
    <property type="project" value="TAIR"/>
</dbReference>
<dbReference type="GO" id="GO:0046872">
    <property type="term" value="F:metal ion binding"/>
    <property type="evidence" value="ECO:0007669"/>
    <property type="project" value="UniProtKB-KW"/>
</dbReference>
<dbReference type="GO" id="GO:0006811">
    <property type="term" value="P:monoatomic ion transport"/>
    <property type="evidence" value="ECO:0007669"/>
    <property type="project" value="UniProtKB-KW"/>
</dbReference>
<dbReference type="CDD" id="cd06186">
    <property type="entry name" value="NOX_Duox_like_FAD_NADP"/>
    <property type="match status" value="1"/>
</dbReference>
<dbReference type="FunFam" id="3.40.50.80:FF:000039">
    <property type="entry name" value="Ferric reduction oxidase 3"/>
    <property type="match status" value="1"/>
</dbReference>
<dbReference type="Gene3D" id="3.40.50.80">
    <property type="entry name" value="Nucleotide-binding domain of ferredoxin-NADP reductase (FNR) module"/>
    <property type="match status" value="2"/>
</dbReference>
<dbReference type="InterPro" id="IPR013112">
    <property type="entry name" value="FAD-bd_8"/>
</dbReference>
<dbReference type="InterPro" id="IPR017927">
    <property type="entry name" value="FAD-bd_FR_type"/>
</dbReference>
<dbReference type="InterPro" id="IPR013130">
    <property type="entry name" value="Fe3_Rdtase_TM_dom"/>
</dbReference>
<dbReference type="InterPro" id="IPR013121">
    <property type="entry name" value="Fe_red_NAD-bd_6"/>
</dbReference>
<dbReference type="InterPro" id="IPR039261">
    <property type="entry name" value="FNR_nucleotide-bd"/>
</dbReference>
<dbReference type="InterPro" id="IPR050369">
    <property type="entry name" value="RBOH/FRE"/>
</dbReference>
<dbReference type="InterPro" id="IPR017938">
    <property type="entry name" value="Riboflavin_synthase-like_b-brl"/>
</dbReference>
<dbReference type="PANTHER" id="PTHR11972:SF148">
    <property type="entry name" value="FERRIC REDUCTION OXIDASE 3, MITOCHONDRIAL-RELATED"/>
    <property type="match status" value="1"/>
</dbReference>
<dbReference type="PANTHER" id="PTHR11972">
    <property type="entry name" value="NADPH OXIDASE"/>
    <property type="match status" value="1"/>
</dbReference>
<dbReference type="Pfam" id="PF08022">
    <property type="entry name" value="FAD_binding_8"/>
    <property type="match status" value="1"/>
</dbReference>
<dbReference type="Pfam" id="PF01794">
    <property type="entry name" value="Ferric_reduct"/>
    <property type="match status" value="1"/>
</dbReference>
<dbReference type="Pfam" id="PF08030">
    <property type="entry name" value="NAD_binding_6"/>
    <property type="match status" value="1"/>
</dbReference>
<dbReference type="SFLD" id="SFLDS00052">
    <property type="entry name" value="Ferric_Reductase_Domain"/>
    <property type="match status" value="1"/>
</dbReference>
<dbReference type="SFLD" id="SFLDG01168">
    <property type="entry name" value="Ferric_reductase_subgroup_(FRE"/>
    <property type="match status" value="1"/>
</dbReference>
<dbReference type="SUPFAM" id="SSF52343">
    <property type="entry name" value="Ferredoxin reductase-like, C-terminal NADP-linked domain"/>
    <property type="match status" value="1"/>
</dbReference>
<dbReference type="SUPFAM" id="SSF63380">
    <property type="entry name" value="Riboflavin synthase domain-like"/>
    <property type="match status" value="1"/>
</dbReference>
<dbReference type="PROSITE" id="PS51384">
    <property type="entry name" value="FAD_FR"/>
    <property type="match status" value="1"/>
</dbReference>
<reference key="1">
    <citation type="journal article" date="1999" name="Nature">
        <title>A ferric-chelate reductase for iron uptake from soils.</title>
        <authorList>
            <person name="Robinson N.J."/>
            <person name="Procter C.M."/>
            <person name="Connolly E.L."/>
            <person name="Guerinot M.L."/>
        </authorList>
    </citation>
    <scope>NUCLEOTIDE SEQUENCE [GENOMIC DNA / MRNA]</scope>
    <scope>TISSUE SPECIFICITY</scope>
    <source>
        <strain>cv. Landsberg erecta</strain>
    </source>
</reference>
<reference key="2">
    <citation type="journal article" date="2000" name="Nature">
        <title>Sequence and analysis of chromosome 1 of the plant Arabidopsis thaliana.</title>
        <authorList>
            <person name="Theologis A."/>
            <person name="Ecker J.R."/>
            <person name="Palm C.J."/>
            <person name="Federspiel N.A."/>
            <person name="Kaul S."/>
            <person name="White O."/>
            <person name="Alonso J."/>
            <person name="Altafi H."/>
            <person name="Araujo R."/>
            <person name="Bowman C.L."/>
            <person name="Brooks S.Y."/>
            <person name="Buehler E."/>
            <person name="Chan A."/>
            <person name="Chao Q."/>
            <person name="Chen H."/>
            <person name="Cheuk R.F."/>
            <person name="Chin C.W."/>
            <person name="Chung M.K."/>
            <person name="Conn L."/>
            <person name="Conway A.B."/>
            <person name="Conway A.R."/>
            <person name="Creasy T.H."/>
            <person name="Dewar K."/>
            <person name="Dunn P."/>
            <person name="Etgu P."/>
            <person name="Feldblyum T.V."/>
            <person name="Feng J.-D."/>
            <person name="Fong B."/>
            <person name="Fujii C.Y."/>
            <person name="Gill J.E."/>
            <person name="Goldsmith A.D."/>
            <person name="Haas B."/>
            <person name="Hansen N.F."/>
            <person name="Hughes B."/>
            <person name="Huizar L."/>
            <person name="Hunter J.L."/>
            <person name="Jenkins J."/>
            <person name="Johnson-Hopson C."/>
            <person name="Khan S."/>
            <person name="Khaykin E."/>
            <person name="Kim C.J."/>
            <person name="Koo H.L."/>
            <person name="Kremenetskaia I."/>
            <person name="Kurtz D.B."/>
            <person name="Kwan A."/>
            <person name="Lam B."/>
            <person name="Langin-Hooper S."/>
            <person name="Lee A."/>
            <person name="Lee J.M."/>
            <person name="Lenz C.A."/>
            <person name="Li J.H."/>
            <person name="Li Y.-P."/>
            <person name="Lin X."/>
            <person name="Liu S.X."/>
            <person name="Liu Z.A."/>
            <person name="Luros J.S."/>
            <person name="Maiti R."/>
            <person name="Marziali A."/>
            <person name="Militscher J."/>
            <person name="Miranda M."/>
            <person name="Nguyen M."/>
            <person name="Nierman W.C."/>
            <person name="Osborne B.I."/>
            <person name="Pai G."/>
            <person name="Peterson J."/>
            <person name="Pham P.K."/>
            <person name="Rizzo M."/>
            <person name="Rooney T."/>
            <person name="Rowley D."/>
            <person name="Sakano H."/>
            <person name="Salzberg S.L."/>
            <person name="Schwartz J.R."/>
            <person name="Shinn P."/>
            <person name="Southwick A.M."/>
            <person name="Sun H."/>
            <person name="Tallon L.J."/>
            <person name="Tambunga G."/>
            <person name="Toriumi M.J."/>
            <person name="Town C.D."/>
            <person name="Utterback T."/>
            <person name="Van Aken S."/>
            <person name="Vaysberg M."/>
            <person name="Vysotskaia V.S."/>
            <person name="Walker M."/>
            <person name="Wu D."/>
            <person name="Yu G."/>
            <person name="Fraser C.M."/>
            <person name="Venter J.C."/>
            <person name="Davis R.W."/>
        </authorList>
    </citation>
    <scope>NUCLEOTIDE SEQUENCE [LARGE SCALE GENOMIC DNA]</scope>
    <source>
        <strain>cv. Columbia</strain>
    </source>
</reference>
<reference key="3">
    <citation type="journal article" date="2017" name="Plant J.">
        <title>Araport11: a complete reannotation of the Arabidopsis thaliana reference genome.</title>
        <authorList>
            <person name="Cheng C.Y."/>
            <person name="Krishnakumar V."/>
            <person name="Chan A.P."/>
            <person name="Thibaud-Nissen F."/>
            <person name="Schobel S."/>
            <person name="Town C.D."/>
        </authorList>
    </citation>
    <scope>GENOME REANNOTATION</scope>
    <source>
        <strain>cv. Columbia</strain>
    </source>
</reference>
<reference key="4">
    <citation type="journal article" date="2006" name="Planta">
        <title>Expression profiling of the Arabidopsis ferric chelate reductase (FRO) gene family reveals differential regulation by iron and copper.</title>
        <authorList>
            <person name="Mukherjee I."/>
            <person name="Campbell N.H."/>
            <person name="Ash J.S."/>
            <person name="Connolly E.L."/>
        </authorList>
    </citation>
    <scope>TISSUE SPECIFICITY</scope>
</reference>
<reference key="5">
    <citation type="journal article" date="2009" name="Plant Sci.">
        <title>Iron uptake mechanisms in plants: Functions of the FRO family of ferric reductases.</title>
        <authorList>
            <person name="Jeong J."/>
            <person name="Connolly E.L."/>
        </authorList>
    </citation>
    <scope>GENE FAMILY</scope>
    <scope>NOMENCLATURE</scope>
</reference>
<comment type="function">
    <text evidence="1">Ferric chelate reductase involved in iron reduction in roots (By similarity). May participate in the transport of electrons to a Fe(3+) ion via FAD and heme intermediates.</text>
</comment>
<comment type="catalytic activity">
    <reaction>
        <text>2 a Fe(II)-siderophore + NAD(+) + H(+) = 2 a Fe(III)-siderophore + NADH</text>
        <dbReference type="Rhea" id="RHEA:15061"/>
        <dbReference type="Rhea" id="RHEA-COMP:11342"/>
        <dbReference type="Rhea" id="RHEA-COMP:11344"/>
        <dbReference type="ChEBI" id="CHEBI:15378"/>
        <dbReference type="ChEBI" id="CHEBI:29033"/>
        <dbReference type="ChEBI" id="CHEBI:29034"/>
        <dbReference type="ChEBI" id="CHEBI:57540"/>
        <dbReference type="ChEBI" id="CHEBI:57945"/>
        <dbReference type="EC" id="1.16.1.7"/>
    </reaction>
</comment>
<comment type="cofactor">
    <cofactor evidence="6">
        <name>FAD</name>
        <dbReference type="ChEBI" id="CHEBI:57692"/>
    </cofactor>
</comment>
<comment type="subcellular location">
    <subcellularLocation>
        <location evidence="6">Membrane</location>
        <topology evidence="6">Multi-pass membrane protein</topology>
    </subcellularLocation>
</comment>
<comment type="tissue specificity">
    <text evidence="4 5">Expressed in siliques. Detected in roots.</text>
</comment>
<comment type="similarity">
    <text evidence="6">Belongs to the ferric reductase (FRE) family.</text>
</comment>
<organism>
    <name type="scientific">Arabidopsis thaliana</name>
    <name type="common">Mouse-ear cress</name>
    <dbReference type="NCBI Taxonomy" id="3702"/>
    <lineage>
        <taxon>Eukaryota</taxon>
        <taxon>Viridiplantae</taxon>
        <taxon>Streptophyta</taxon>
        <taxon>Embryophyta</taxon>
        <taxon>Tracheophyta</taxon>
        <taxon>Spermatophyta</taxon>
        <taxon>Magnoliopsida</taxon>
        <taxon>eudicotyledons</taxon>
        <taxon>Gunneridae</taxon>
        <taxon>Pentapetalae</taxon>
        <taxon>rosids</taxon>
        <taxon>malvids</taxon>
        <taxon>Brassicales</taxon>
        <taxon>Brassicaceae</taxon>
        <taxon>Camelineae</taxon>
        <taxon>Arabidopsis</taxon>
    </lineage>
</organism>
<accession>Q9LMM2</accession>
<accession>P92950</accession>
<proteinExistence type="evidence at transcript level"/>
<gene>
    <name type="primary">FRO1</name>
    <name type="ordered locus">At1g01590</name>
    <name type="ORF">F22L4.13</name>
</gene>
<sequence length="704" mass="79600">MGVGEMNKEVIDKVIKFLMMVILMGTIVIWIMMPTSTYKEIWLTSMRAKLGKSIYYGRPGVNLLVYMFPMILLAFLGCIYLHLKKSTTVNQFNSGVEKKRAKFGALRRPMLVNGPLGIVTVTEVMFLTMFMALLLWSLANYMYRTFVNVTSESAATDGNNLWQARLDLIAVRIGIVGNICLAFLFYPVARGSSLLAAVGLTSESSIKYHIWLGHLVMIIFTSHGLCYFIYWISKNQLVSKMLEWDRTAVSNLAGEIALVAGLMMWVTTYPKIRRRLFEVFFYSHYLYIVFMLFFVFHVGISHALIPLPGFYIFLVDRFLRFLQSRNNVKLVSARVLPCDTVELNFSKNPMLMYSPTSTMFVNIPSISKLQWHPFTIISSSKLEPETLSVMIKSQGKWSTKLYDMLSSSSSDQINRLAVSVEGPYGPSSTDFLRHESLVMVSGGSGITPFISIVRDLFYMSSTHKCKIPKMTLICAFKNSSDLSMLDLILPTSGLTTDMASFVDIQIKAFVTREEKTSVKESTHNRNIIKTRHFKPNVSDQPISPILGPNSWLCLAAILSSSFMIFIVIIAIITRYHIHPIDQNSEKYTWAYKSLIYLVSISITVVTTSTAAMLWNKKKYYAKNDQYVDNLSPVIIESSPQQLISQSTDIHYGERPNLNKLLVGLKGSSVGILVCGPKKMRQKVAKICSFGSAENLHFESISFSW</sequence>
<name>FRO1_ARATH</name>
<evidence type="ECO:0000250" key="1"/>
<evidence type="ECO:0000255" key="2"/>
<evidence type="ECO:0000255" key="3">
    <source>
        <dbReference type="PROSITE-ProRule" id="PRU00716"/>
    </source>
</evidence>
<evidence type="ECO:0000269" key="4">
    <source>
    </source>
</evidence>
<evidence type="ECO:0000269" key="5">
    <source>
    </source>
</evidence>
<evidence type="ECO:0000305" key="6"/>